<protein>
    <recommendedName>
        <fullName>Knob-associated histidine-rich protein</fullName>
        <shortName>HRPI</shortName>
        <shortName>KAHRP</shortName>
    </recommendedName>
</protein>
<name>KNOB_PLAFA</name>
<dbReference type="EMBL" id="M19028">
    <property type="protein sequence ID" value="AAA29630.1"/>
    <property type="molecule type" value="mRNA"/>
</dbReference>
<dbReference type="PIR" id="A54494">
    <property type="entry name" value="A54494"/>
</dbReference>
<dbReference type="BMRB" id="P13817"/>
<dbReference type="DrugBank" id="DB11638">
    <property type="generic name" value="Artenimol"/>
</dbReference>
<dbReference type="VEuPathDB" id="PlasmoDB:PF3D7_0202000"/>
<dbReference type="VEuPathDB" id="PlasmoDB:Pf7G8-2_000050200"/>
<dbReference type="VEuPathDB" id="PlasmoDB:Pf7G8_020006800"/>
<dbReference type="VEuPathDB" id="PlasmoDB:PfCD01_020007100"/>
<dbReference type="VEuPathDB" id="PlasmoDB:PfDd2_020004900"/>
<dbReference type="VEuPathDB" id="PlasmoDB:PfGA01_020005100"/>
<dbReference type="VEuPathDB" id="PlasmoDB:PfGB4_020005100"/>
<dbReference type="VEuPathDB" id="PlasmoDB:PfGN01_020007500"/>
<dbReference type="VEuPathDB" id="PlasmoDB:PfHB3_020006800"/>
<dbReference type="VEuPathDB" id="PlasmoDB:PfIT_020006800"/>
<dbReference type="VEuPathDB" id="PlasmoDB:PfKH01_020007400"/>
<dbReference type="VEuPathDB" id="PlasmoDB:PfKH02_020006100"/>
<dbReference type="VEuPathDB" id="PlasmoDB:PfML01_000030600"/>
<dbReference type="VEuPathDB" id="PlasmoDB:PfNF135_020008400"/>
<dbReference type="VEuPathDB" id="PlasmoDB:PfNF166_020007300"/>
<dbReference type="VEuPathDB" id="PlasmoDB:PfNF54_020007000"/>
<dbReference type="VEuPathDB" id="PlasmoDB:PfSD01_020007600"/>
<dbReference type="VEuPathDB" id="PlasmoDB:PfSN01_020005100"/>
<dbReference type="VEuPathDB" id="PlasmoDB:PfTG01_020007100"/>
<dbReference type="GO" id="GO:0005576">
    <property type="term" value="C:extracellular region"/>
    <property type="evidence" value="ECO:0007669"/>
    <property type="project" value="UniProtKB-SubCell"/>
</dbReference>
<dbReference type="InterPro" id="IPR040805">
    <property type="entry name" value="EMP3/KAHRP_N"/>
</dbReference>
<dbReference type="Pfam" id="PF17986">
    <property type="entry name" value="EKAL"/>
    <property type="match status" value="1"/>
</dbReference>
<proteinExistence type="evidence at transcript level"/>
<feature type="signal peptide" evidence="1">
    <location>
        <begin position="1"/>
        <end position="34"/>
    </location>
</feature>
<feature type="chain" id="PRO_0000024544" description="Knob-associated histidine-rich protein">
    <location>
        <begin position="35"/>
        <end position="473" status="greater than"/>
    </location>
</feature>
<feature type="region of interest" description="Disordered" evidence="2">
    <location>
        <begin position="57"/>
        <end position="143"/>
    </location>
</feature>
<feature type="region of interest" description="Disordered" evidence="2">
    <location>
        <begin position="347"/>
        <end position="473"/>
    </location>
</feature>
<feature type="compositionally biased region" description="Basic residues" evidence="2">
    <location>
        <begin position="57"/>
        <end position="87"/>
    </location>
</feature>
<feature type="compositionally biased region" description="Low complexity" evidence="2">
    <location>
        <begin position="95"/>
        <end position="104"/>
    </location>
</feature>
<feature type="compositionally biased region" description="Basic residues" evidence="2">
    <location>
        <begin position="108"/>
        <end position="117"/>
    </location>
</feature>
<feature type="compositionally biased region" description="Basic and acidic residues" evidence="2">
    <location>
        <begin position="354"/>
        <end position="375"/>
    </location>
</feature>
<feature type="compositionally biased region" description="Basic and acidic residues" evidence="2">
    <location>
        <begin position="396"/>
        <end position="405"/>
    </location>
</feature>
<feature type="compositionally biased region" description="Basic residues" evidence="2">
    <location>
        <begin position="406"/>
        <end position="422"/>
    </location>
</feature>
<feature type="compositionally biased region" description="Basic and acidic residues" evidence="2">
    <location>
        <begin position="423"/>
        <end position="444"/>
    </location>
</feature>
<feature type="compositionally biased region" description="Basic and acidic residues" evidence="2">
    <location>
        <begin position="453"/>
        <end position="473"/>
    </location>
</feature>
<feature type="glycosylation site" description="N-linked (GlcNAc...) asparagine" evidence="1">
    <location>
        <position position="42"/>
    </location>
</feature>
<feature type="non-terminal residue">
    <location>
        <position position="473"/>
    </location>
</feature>
<accession>P13817</accession>
<comment type="function">
    <text>KAHRP might mimick human histidine-rich glycoproteins to anchor host thrombospondin or a parasite analog in a binding complex with the endothelial cell receptor.</text>
</comment>
<comment type="subcellular location">
    <subcellularLocation>
        <location>Secreted</location>
    </subcellularLocation>
    <text>Cytoplasmic side of the membrane of infected erythrocytes.</text>
</comment>
<sequence length="473" mass="53191">MKSFKNKNTLRRKKAFPVFTKILLVSFLVWVLKCSNNCNNGNGSGDSFDFRNKRTLAQKQHEHHHHHHHQHQHQHQAPHQAHHHHHHGEVNHQAPQVHQQVHGQDQAHHHHHHHHHQLQPQQLQGTVANPPSNEPVVKTQVFREARPGGGFKAYEEKYESKHYKLKENVVDGKKDCDEKYEAANYAFSEECPYTVNDYSQENGPNIFALRKRFPLGMNDEDEEGKEALAIKDKLPGGLDEYQNQLYGICNETCTTCGPAAIDYVPADAPNGYAYGGSAHDGSHGNLRGHGNKGSEGYGYEAPYNPGFNGAPGSNGMQNYVPPHGAGYSAPYGVPHGAAHGSRYSSFSSVNKYGKHGDEKHHSSKKHEGNDGEGEKKKKSKKHKDHDGEKKKSKKHKDNEDAESVKSKKHKSHDCEKKKSKKHKDNEDAESVKSKKSVKEKGEKHNGKKPCSKKTNEENKNKEKTNNLKSDGSK</sequence>
<evidence type="ECO:0000255" key="1"/>
<evidence type="ECO:0000256" key="2">
    <source>
        <dbReference type="SAM" id="MobiDB-lite"/>
    </source>
</evidence>
<organism>
    <name type="scientific">Plasmodium falciparum</name>
    <dbReference type="NCBI Taxonomy" id="5833"/>
    <lineage>
        <taxon>Eukaryota</taxon>
        <taxon>Sar</taxon>
        <taxon>Alveolata</taxon>
        <taxon>Apicomplexa</taxon>
        <taxon>Aconoidasida</taxon>
        <taxon>Haemosporida</taxon>
        <taxon>Plasmodiidae</taxon>
        <taxon>Plasmodium</taxon>
        <taxon>Plasmodium (Laverania)</taxon>
    </lineage>
</organism>
<reference key="1">
    <citation type="journal article" date="1987" name="Mol. Biochem. Parasitol.">
        <title>Structure and expression of the knob-associated histidine-rich protein of Plasmodium falciparum.</title>
        <authorList>
            <person name="Ellis J."/>
            <person name="Irving D.O."/>
            <person name="Wellems T.E."/>
            <person name="Howard R.J."/>
            <person name="Cross G.A.M."/>
        </authorList>
    </citation>
    <scope>NUCLEOTIDE SEQUENCE [MRNA]</scope>
</reference>
<keyword id="KW-0325">Glycoprotein</keyword>
<keyword id="KW-0461">Malaria</keyword>
<keyword id="KW-0677">Repeat</keyword>
<keyword id="KW-0964">Secreted</keyword>
<keyword id="KW-0732">Signal</keyword>